<accession>Q04G28</accession>
<protein>
    <recommendedName>
        <fullName evidence="1">Probable D-serine dehydratase</fullName>
        <ecNumber evidence="1">4.3.1.18</ecNumber>
    </recommendedName>
    <alternativeName>
        <fullName evidence="1">D-serine deaminase</fullName>
        <shortName evidence="1">DSD</shortName>
    </alternativeName>
</protein>
<sequence>MTETLLKKKLNLNDQFLLNLKNYQEIFWKNPNYGDELPDLDVNRETIFQANRRLERFAPYLESVFSDTKRSKGIIESPIQRMDSIKDLLSVKGSLLIKRDDLMPVSGSIKSRGGIYEVLCFAEKIAIENGFDLKKDNYQDLRKDKYRKLFNQWRIEVASTGNLGLSVGLMASTLGFKARIHMSHDATDWKINKLLQNGVEVKIYDDNFSNAVAAARVSSQRDPYSYFIDDEGSKLLFAGYATAGERVKKQLSKMQIEVSKEHPLVVYLPAGVGGSPSGVAFGLKLQFADAVIPIFVEPTHMPSVLLGMASGLNHDISVYDIGIDGKTAADGLAVGRPSMIAGKYMKDKLFGIATVSDSDMFAYQGMLKKLENIEVEPSAAVGIRGLIQSKEISEIPDSATHMVWATGGSMVPKNTMHKYEDKAVRIFNTWKSE</sequence>
<proteinExistence type="inferred from homology"/>
<dbReference type="EC" id="4.3.1.18" evidence="1"/>
<dbReference type="EMBL" id="CP000411">
    <property type="protein sequence ID" value="ABJ56594.1"/>
    <property type="status" value="ALT_INIT"/>
    <property type="molecule type" value="Genomic_DNA"/>
</dbReference>
<dbReference type="RefSeq" id="WP_041346443.1">
    <property type="nucleotide sequence ID" value="NC_008528.1"/>
</dbReference>
<dbReference type="SMR" id="Q04G28"/>
<dbReference type="STRING" id="203123.OEOE_0657"/>
<dbReference type="DNASU" id="4416798"/>
<dbReference type="KEGG" id="ooe:OEOE_0657"/>
<dbReference type="PATRIC" id="fig|203123.7.peg.665"/>
<dbReference type="eggNOG" id="COG3048">
    <property type="taxonomic scope" value="Bacteria"/>
</dbReference>
<dbReference type="HOGENOM" id="CLU_035707_0_0_9"/>
<dbReference type="Proteomes" id="UP000000774">
    <property type="component" value="Chromosome"/>
</dbReference>
<dbReference type="GO" id="GO:0008721">
    <property type="term" value="F:D-serine ammonia-lyase activity"/>
    <property type="evidence" value="ECO:0007669"/>
    <property type="project" value="UniProtKB-EC"/>
</dbReference>
<dbReference type="GO" id="GO:0016836">
    <property type="term" value="F:hydro-lyase activity"/>
    <property type="evidence" value="ECO:0007669"/>
    <property type="project" value="UniProtKB-UniRule"/>
</dbReference>
<dbReference type="GO" id="GO:0030170">
    <property type="term" value="F:pyridoxal phosphate binding"/>
    <property type="evidence" value="ECO:0007669"/>
    <property type="project" value="InterPro"/>
</dbReference>
<dbReference type="GO" id="GO:0036088">
    <property type="term" value="P:D-serine catabolic process"/>
    <property type="evidence" value="ECO:0007669"/>
    <property type="project" value="TreeGrafter"/>
</dbReference>
<dbReference type="GO" id="GO:0009097">
    <property type="term" value="P:isoleucine biosynthetic process"/>
    <property type="evidence" value="ECO:0007669"/>
    <property type="project" value="TreeGrafter"/>
</dbReference>
<dbReference type="CDD" id="cd06447">
    <property type="entry name" value="D-Ser-dehyd"/>
    <property type="match status" value="1"/>
</dbReference>
<dbReference type="Gene3D" id="3.40.50.1100">
    <property type="match status" value="2"/>
</dbReference>
<dbReference type="HAMAP" id="MF_01030">
    <property type="entry name" value="D_Ser_dehydrat"/>
    <property type="match status" value="1"/>
</dbReference>
<dbReference type="InterPro" id="IPR011780">
    <property type="entry name" value="D_Ser_am_lyase"/>
</dbReference>
<dbReference type="InterPro" id="IPR050147">
    <property type="entry name" value="Ser/Thr_Dehydratase"/>
</dbReference>
<dbReference type="InterPro" id="IPR000634">
    <property type="entry name" value="Ser/Thr_deHydtase_PyrdxlP-BS"/>
</dbReference>
<dbReference type="InterPro" id="IPR001926">
    <property type="entry name" value="TrpB-like_PALP"/>
</dbReference>
<dbReference type="InterPro" id="IPR036052">
    <property type="entry name" value="TrpB-like_PALP_sf"/>
</dbReference>
<dbReference type="NCBIfam" id="TIGR02035">
    <property type="entry name" value="D_Ser_am_lyase"/>
    <property type="match status" value="1"/>
</dbReference>
<dbReference type="NCBIfam" id="NF002823">
    <property type="entry name" value="PRK02991.1"/>
    <property type="match status" value="1"/>
</dbReference>
<dbReference type="PANTHER" id="PTHR48078:SF9">
    <property type="entry name" value="D-SERINE DEHYDRATASE"/>
    <property type="match status" value="1"/>
</dbReference>
<dbReference type="PANTHER" id="PTHR48078">
    <property type="entry name" value="THREONINE DEHYDRATASE, MITOCHONDRIAL-RELATED"/>
    <property type="match status" value="1"/>
</dbReference>
<dbReference type="Pfam" id="PF00291">
    <property type="entry name" value="PALP"/>
    <property type="match status" value="1"/>
</dbReference>
<dbReference type="SUPFAM" id="SSF53686">
    <property type="entry name" value="Tryptophan synthase beta subunit-like PLP-dependent enzymes"/>
    <property type="match status" value="1"/>
</dbReference>
<dbReference type="PROSITE" id="PS00165">
    <property type="entry name" value="DEHYDRATASE_SER_THR"/>
    <property type="match status" value="1"/>
</dbReference>
<organism>
    <name type="scientific">Oenococcus oeni (strain ATCC BAA-331 / PSU-1)</name>
    <dbReference type="NCBI Taxonomy" id="203123"/>
    <lineage>
        <taxon>Bacteria</taxon>
        <taxon>Bacillati</taxon>
        <taxon>Bacillota</taxon>
        <taxon>Bacilli</taxon>
        <taxon>Lactobacillales</taxon>
        <taxon>Lactobacillaceae</taxon>
        <taxon>Oenococcus</taxon>
    </lineage>
</organism>
<feature type="chain" id="PRO_0000291734" description="Probable D-serine dehydratase">
    <location>
        <begin position="1"/>
        <end position="433"/>
    </location>
</feature>
<feature type="modified residue" description="N6-(pyridoxal phosphate)lysine" evidence="1">
    <location>
        <position position="110"/>
    </location>
</feature>
<evidence type="ECO:0000255" key="1">
    <source>
        <dbReference type="HAMAP-Rule" id="MF_01030"/>
    </source>
</evidence>
<evidence type="ECO:0000305" key="2"/>
<gene>
    <name evidence="1" type="primary">dsdA</name>
    <name type="ordered locus">OEOE_0657</name>
</gene>
<keyword id="KW-0456">Lyase</keyword>
<keyword id="KW-0663">Pyridoxal phosphate</keyword>
<keyword id="KW-1185">Reference proteome</keyword>
<comment type="catalytic activity">
    <reaction evidence="1">
        <text>D-serine = pyruvate + NH4(+)</text>
        <dbReference type="Rhea" id="RHEA:13977"/>
        <dbReference type="ChEBI" id="CHEBI:15361"/>
        <dbReference type="ChEBI" id="CHEBI:28938"/>
        <dbReference type="ChEBI" id="CHEBI:35247"/>
        <dbReference type="EC" id="4.3.1.18"/>
    </reaction>
</comment>
<comment type="cofactor">
    <cofactor evidence="1">
        <name>pyridoxal 5'-phosphate</name>
        <dbReference type="ChEBI" id="CHEBI:597326"/>
    </cofactor>
</comment>
<comment type="similarity">
    <text evidence="1">Belongs to the serine/threonine dehydratase family. DsdA subfamily.</text>
</comment>
<comment type="sequence caution" evidence="2">
    <conflict type="erroneous initiation">
        <sequence resource="EMBL-CDS" id="ABJ56594"/>
    </conflict>
</comment>
<name>SDHD_OENOB</name>
<reference key="1">
    <citation type="journal article" date="2006" name="Proc. Natl. Acad. Sci. U.S.A.">
        <title>Comparative genomics of the lactic acid bacteria.</title>
        <authorList>
            <person name="Makarova K.S."/>
            <person name="Slesarev A."/>
            <person name="Wolf Y.I."/>
            <person name="Sorokin A."/>
            <person name="Mirkin B."/>
            <person name="Koonin E.V."/>
            <person name="Pavlov A."/>
            <person name="Pavlova N."/>
            <person name="Karamychev V."/>
            <person name="Polouchine N."/>
            <person name="Shakhova V."/>
            <person name="Grigoriev I."/>
            <person name="Lou Y."/>
            <person name="Rohksar D."/>
            <person name="Lucas S."/>
            <person name="Huang K."/>
            <person name="Goodstein D.M."/>
            <person name="Hawkins T."/>
            <person name="Plengvidhya V."/>
            <person name="Welker D."/>
            <person name="Hughes J."/>
            <person name="Goh Y."/>
            <person name="Benson A."/>
            <person name="Baldwin K."/>
            <person name="Lee J.-H."/>
            <person name="Diaz-Muniz I."/>
            <person name="Dosti B."/>
            <person name="Smeianov V."/>
            <person name="Wechter W."/>
            <person name="Barabote R."/>
            <person name="Lorca G."/>
            <person name="Altermann E."/>
            <person name="Barrangou R."/>
            <person name="Ganesan B."/>
            <person name="Xie Y."/>
            <person name="Rawsthorne H."/>
            <person name="Tamir D."/>
            <person name="Parker C."/>
            <person name="Breidt F."/>
            <person name="Broadbent J.R."/>
            <person name="Hutkins R."/>
            <person name="O'Sullivan D."/>
            <person name="Steele J."/>
            <person name="Unlu G."/>
            <person name="Saier M.H. Jr."/>
            <person name="Klaenhammer T."/>
            <person name="Richardson P."/>
            <person name="Kozyavkin S."/>
            <person name="Weimer B.C."/>
            <person name="Mills D.A."/>
        </authorList>
    </citation>
    <scope>NUCLEOTIDE SEQUENCE [LARGE SCALE GENOMIC DNA]</scope>
    <source>
        <strain>ATCC BAA-331 / PSU-1</strain>
    </source>
</reference>